<evidence type="ECO:0000250" key="1"/>
<evidence type="ECO:0000255" key="2"/>
<evidence type="ECO:0000255" key="3">
    <source>
        <dbReference type="PROSITE-ProRule" id="PRU00205"/>
    </source>
</evidence>
<evidence type="ECO:0000256" key="4">
    <source>
        <dbReference type="SAM" id="MobiDB-lite"/>
    </source>
</evidence>
<evidence type="ECO:0000305" key="5"/>
<name>TR1L1_HUMAN</name>
<proteinExistence type="evidence at protein level"/>
<dbReference type="EMBL" id="AK074617">
    <property type="protein sequence ID" value="BAC11091.1"/>
    <property type="molecule type" value="mRNA"/>
</dbReference>
<dbReference type="EMBL" id="BC030831">
    <property type="protein sequence ID" value="AAH30831.1"/>
    <property type="molecule type" value="mRNA"/>
</dbReference>
<dbReference type="CCDS" id="CCDS3707.1"/>
<dbReference type="RefSeq" id="NP_689615.2">
    <property type="nucleotide sequence ID" value="NM_152402.3"/>
</dbReference>
<dbReference type="SMR" id="Q8N609"/>
<dbReference type="BioGRID" id="126347">
    <property type="interactions" value="30"/>
</dbReference>
<dbReference type="FunCoup" id="Q8N609">
    <property type="interactions" value="191"/>
</dbReference>
<dbReference type="IntAct" id="Q8N609">
    <property type="interactions" value="27"/>
</dbReference>
<dbReference type="MINT" id="Q8N609"/>
<dbReference type="STRING" id="9606.ENSP00000309402"/>
<dbReference type="TCDB" id="9.B.311.2.3">
    <property type="family name" value="the 6-7 tms tram-lag (tram-lag) family"/>
</dbReference>
<dbReference type="iPTMnet" id="Q8N609"/>
<dbReference type="PhosphoSitePlus" id="Q8N609"/>
<dbReference type="BioMuta" id="TRAM1L1"/>
<dbReference type="DMDM" id="166231532"/>
<dbReference type="MassIVE" id="Q8N609"/>
<dbReference type="PaxDb" id="9606-ENSP00000309402"/>
<dbReference type="PeptideAtlas" id="Q8N609"/>
<dbReference type="ProteomicsDB" id="72121"/>
<dbReference type="Antibodypedia" id="26589">
    <property type="antibodies" value="80 antibodies from 16 providers"/>
</dbReference>
<dbReference type="DNASU" id="133022"/>
<dbReference type="Ensembl" id="ENST00000310754.5">
    <property type="protein sequence ID" value="ENSP00000309402.4"/>
    <property type="gene ID" value="ENSG00000174599.5"/>
</dbReference>
<dbReference type="GeneID" id="133022"/>
<dbReference type="KEGG" id="hsa:133022"/>
<dbReference type="MANE-Select" id="ENST00000310754.5">
    <property type="protein sequence ID" value="ENSP00000309402.4"/>
    <property type="RefSeq nucleotide sequence ID" value="NM_152402.3"/>
    <property type="RefSeq protein sequence ID" value="NP_689615.2"/>
</dbReference>
<dbReference type="UCSC" id="uc003ibv.5">
    <property type="organism name" value="human"/>
</dbReference>
<dbReference type="AGR" id="HGNC:28371"/>
<dbReference type="CTD" id="133022"/>
<dbReference type="DisGeNET" id="133022"/>
<dbReference type="GeneCards" id="TRAM1L1"/>
<dbReference type="HGNC" id="HGNC:28371">
    <property type="gene designation" value="TRAM1L1"/>
</dbReference>
<dbReference type="HPA" id="ENSG00000174599">
    <property type="expression patterns" value="Low tissue specificity"/>
</dbReference>
<dbReference type="MIM" id="617505">
    <property type="type" value="gene"/>
</dbReference>
<dbReference type="neXtProt" id="NX_Q8N609"/>
<dbReference type="OpenTargets" id="ENSG00000174599"/>
<dbReference type="PharmGKB" id="PA134911361"/>
<dbReference type="VEuPathDB" id="HostDB:ENSG00000174599"/>
<dbReference type="eggNOG" id="KOG1608">
    <property type="taxonomic scope" value="Eukaryota"/>
</dbReference>
<dbReference type="GeneTree" id="ENSGT00510000046470"/>
<dbReference type="HOGENOM" id="CLU_062830_0_0_1"/>
<dbReference type="InParanoid" id="Q8N609"/>
<dbReference type="OMA" id="HGFPELY"/>
<dbReference type="OrthoDB" id="3053196at2759"/>
<dbReference type="PAN-GO" id="Q8N609">
    <property type="GO annotations" value="2 GO annotations based on evolutionary models"/>
</dbReference>
<dbReference type="PhylomeDB" id="Q8N609"/>
<dbReference type="TreeFam" id="TF314319"/>
<dbReference type="PathwayCommons" id="Q8N609"/>
<dbReference type="SignaLink" id="Q8N609"/>
<dbReference type="BioGRID-ORCS" id="133022">
    <property type="hits" value="47 hits in 1146 CRISPR screens"/>
</dbReference>
<dbReference type="GenomeRNAi" id="133022"/>
<dbReference type="Pharos" id="Q8N609">
    <property type="development level" value="Tdark"/>
</dbReference>
<dbReference type="PRO" id="PR:Q8N609"/>
<dbReference type="Proteomes" id="UP000005640">
    <property type="component" value="Chromosome 4"/>
</dbReference>
<dbReference type="RNAct" id="Q8N609">
    <property type="molecule type" value="protein"/>
</dbReference>
<dbReference type="Bgee" id="ENSG00000174599">
    <property type="expression patterns" value="Expressed in endothelial cell and 164 other cell types or tissues"/>
</dbReference>
<dbReference type="GO" id="GO:0005789">
    <property type="term" value="C:endoplasmic reticulum membrane"/>
    <property type="evidence" value="ECO:0000318"/>
    <property type="project" value="GO_Central"/>
</dbReference>
<dbReference type="GO" id="GO:0045048">
    <property type="term" value="P:protein insertion into ER membrane"/>
    <property type="evidence" value="ECO:0000318"/>
    <property type="project" value="GO_Central"/>
</dbReference>
<dbReference type="GO" id="GO:0006616">
    <property type="term" value="P:SRP-dependent cotranslational protein targeting to membrane, translocation"/>
    <property type="evidence" value="ECO:0007669"/>
    <property type="project" value="InterPro"/>
</dbReference>
<dbReference type="InterPro" id="IPR006634">
    <property type="entry name" value="TLC-dom"/>
</dbReference>
<dbReference type="InterPro" id="IPR016447">
    <property type="entry name" value="Translocation_assoc_membrane"/>
</dbReference>
<dbReference type="PANTHER" id="PTHR12371:SF9">
    <property type="entry name" value="TRANSLOCATING CHAIN-ASSOCIATED MEMBRANE PROTEIN 1-LIKE 1"/>
    <property type="match status" value="1"/>
</dbReference>
<dbReference type="PANTHER" id="PTHR12371">
    <property type="entry name" value="TRANSLOCATION ASSOCIATED MEMBRANE PROTEIN"/>
    <property type="match status" value="1"/>
</dbReference>
<dbReference type="Pfam" id="PF03798">
    <property type="entry name" value="TRAM_LAG1_CLN8"/>
    <property type="match status" value="1"/>
</dbReference>
<dbReference type="PIRSF" id="PIRSF005449">
    <property type="entry name" value="Translocation_assoc_membrane"/>
    <property type="match status" value="1"/>
</dbReference>
<dbReference type="SMART" id="SM00724">
    <property type="entry name" value="TLC"/>
    <property type="match status" value="1"/>
</dbReference>
<dbReference type="PROSITE" id="PS50922">
    <property type="entry name" value="TLC"/>
    <property type="match status" value="1"/>
</dbReference>
<reference key="1">
    <citation type="journal article" date="2005" name="DNA Res.">
        <title>Signal sequence and keyword trap in silico for selection of full-length human cDNAs encoding secretion or membrane proteins from oligo-capped cDNA libraries.</title>
        <authorList>
            <person name="Otsuki T."/>
            <person name="Ota T."/>
            <person name="Nishikawa T."/>
            <person name="Hayashi K."/>
            <person name="Suzuki Y."/>
            <person name="Yamamoto J."/>
            <person name="Wakamatsu A."/>
            <person name="Kimura K."/>
            <person name="Sakamoto K."/>
            <person name="Hatano N."/>
            <person name="Kawai Y."/>
            <person name="Ishii S."/>
            <person name="Saito K."/>
            <person name="Kojima S."/>
            <person name="Sugiyama T."/>
            <person name="Ono T."/>
            <person name="Okano K."/>
            <person name="Yoshikawa Y."/>
            <person name="Aotsuka S."/>
            <person name="Sasaki N."/>
            <person name="Hattori A."/>
            <person name="Okumura K."/>
            <person name="Nagai K."/>
            <person name="Sugano S."/>
            <person name="Isogai T."/>
        </authorList>
    </citation>
    <scope>NUCLEOTIDE SEQUENCE [LARGE SCALE MRNA]</scope>
    <source>
        <tissue>Embryo</tissue>
    </source>
</reference>
<reference key="2">
    <citation type="journal article" date="2004" name="Genome Res.">
        <title>The status, quality, and expansion of the NIH full-length cDNA project: the Mammalian Gene Collection (MGC).</title>
        <authorList>
            <consortium name="The MGC Project Team"/>
        </authorList>
    </citation>
    <scope>NUCLEOTIDE SEQUENCE [LARGE SCALE MRNA]</scope>
    <source>
        <tissue>Brain</tissue>
    </source>
</reference>
<feature type="chain" id="PRO_0000313706" description="Translocating chain-associated membrane protein 1-like 1">
    <location>
        <begin position="1"/>
        <end position="369"/>
    </location>
</feature>
<feature type="topological domain" description="Cytoplasmic" evidence="2">
    <location>
        <begin position="1"/>
        <end position="29"/>
    </location>
</feature>
<feature type="transmembrane region" description="Helical" evidence="2">
    <location>
        <begin position="30"/>
        <end position="50"/>
    </location>
</feature>
<feature type="topological domain" description="Lumenal" evidence="2">
    <location>
        <begin position="51"/>
        <end position="81"/>
    </location>
</feature>
<feature type="transmembrane region" description="Helical" evidence="2">
    <location>
        <begin position="82"/>
        <end position="102"/>
    </location>
</feature>
<feature type="topological domain" description="Cytoplasmic" evidence="2">
    <location>
        <begin position="103"/>
        <end position="121"/>
    </location>
</feature>
<feature type="transmembrane region" description="Helical" evidence="2">
    <location>
        <begin position="122"/>
        <end position="142"/>
    </location>
</feature>
<feature type="topological domain" description="Lumenal" evidence="2">
    <location>
        <begin position="143"/>
        <end position="164"/>
    </location>
</feature>
<feature type="transmembrane region" description="Helical" evidence="2">
    <location>
        <begin position="165"/>
        <end position="185"/>
    </location>
</feature>
<feature type="topological domain" description="Cytoplasmic" evidence="2">
    <location>
        <begin position="186"/>
        <end position="196"/>
    </location>
</feature>
<feature type="transmembrane region" description="Helical" evidence="2">
    <location>
        <begin position="197"/>
        <end position="215"/>
    </location>
</feature>
<feature type="topological domain" description="Lumenal" evidence="2">
    <location>
        <begin position="216"/>
        <end position="219"/>
    </location>
</feature>
<feature type="transmembrane region" description="Helical" evidence="2">
    <location>
        <begin position="220"/>
        <end position="242"/>
    </location>
</feature>
<feature type="topological domain" description="Cytoplasmic" evidence="2">
    <location>
        <begin position="243"/>
        <end position="249"/>
    </location>
</feature>
<feature type="transmembrane region" description="Helical" evidence="2">
    <location>
        <begin position="250"/>
        <end position="270"/>
    </location>
</feature>
<feature type="topological domain" description="Lumenal" evidence="2">
    <location>
        <begin position="271"/>
        <end position="297"/>
    </location>
</feature>
<feature type="transmembrane region" description="Helical" evidence="2">
    <location>
        <begin position="298"/>
        <end position="318"/>
    </location>
</feature>
<feature type="topological domain" description="Cytoplasmic" evidence="2">
    <location>
        <begin position="319"/>
        <end position="369"/>
    </location>
</feature>
<feature type="domain" description="TLC" evidence="3">
    <location>
        <begin position="117"/>
        <end position="326"/>
    </location>
</feature>
<feature type="region of interest" description="Disordered" evidence="4">
    <location>
        <begin position="335"/>
        <end position="369"/>
    </location>
</feature>
<feature type="compositionally biased region" description="Basic and acidic residues" evidence="4">
    <location>
        <begin position="360"/>
        <end position="369"/>
    </location>
</feature>
<feature type="sequence conflict" description="In Ref. 2; AAH30831." evidence="5" ref="2">
    <original>V</original>
    <variation>A</variation>
    <location>
        <position position="59"/>
    </location>
</feature>
<feature type="sequence conflict" description="In Ref. 1; BAC11091." evidence="5" ref="1">
    <original>I</original>
    <variation>V</variation>
    <location>
        <position position="170"/>
    </location>
</feature>
<comment type="function">
    <text evidence="1">Stimulatory or required for the translocation of secretory proteins across the ER membrane.</text>
</comment>
<comment type="interaction">
    <interactant intactId="EBI-11996766">
        <id>Q8N609</id>
    </interactant>
    <interactant intactId="EBI-12808270">
        <id>P07307-3</id>
        <label>ASGR2</label>
    </interactant>
    <organismsDiffer>false</organismsDiffer>
    <experiments>3</experiments>
</comment>
<comment type="interaction">
    <interactant intactId="EBI-11996766">
        <id>Q8N609</id>
    </interactant>
    <interactant intactId="EBI-11532900">
        <id>J3KQ12</id>
        <label>BSCL2</label>
    </interactant>
    <organismsDiffer>false</organismsDiffer>
    <experiments>3</experiments>
</comment>
<comment type="interaction">
    <interactant intactId="EBI-11996766">
        <id>Q8N609</id>
    </interactant>
    <interactant intactId="EBI-6657396">
        <id>P19397</id>
        <label>CD53</label>
    </interactant>
    <organismsDiffer>false</organismsDiffer>
    <experiments>3</experiments>
</comment>
<comment type="interaction">
    <interactant intactId="EBI-11996766">
        <id>Q8N609</id>
    </interactant>
    <interactant intactId="EBI-7797864">
        <id>P11912</id>
        <label>CD79A</label>
    </interactant>
    <organismsDiffer>false</organismsDiffer>
    <experiments>3</experiments>
</comment>
<comment type="interaction">
    <interactant intactId="EBI-11996766">
        <id>Q8N609</id>
    </interactant>
    <interactant intactId="EBI-2824782">
        <id>Q8TCZ2</id>
        <label>CD99L2</label>
    </interactant>
    <organismsDiffer>false</organismsDiffer>
    <experiments>3</experiments>
</comment>
<comment type="interaction">
    <interactant intactId="EBI-11996766">
        <id>Q8N609</id>
    </interactant>
    <interactant intactId="EBI-11996768">
        <id>Q8NC01</id>
        <label>CLEC1A</label>
    </interactant>
    <organismsDiffer>false</organismsDiffer>
    <experiments>3</experiments>
</comment>
<comment type="interaction">
    <interactant intactId="EBI-11996766">
        <id>Q8N609</id>
    </interactant>
    <interactant intactId="EBI-11291074">
        <id>Q9BQT9</id>
        <label>CLSTN3</label>
    </interactant>
    <organismsDiffer>false</organismsDiffer>
    <experiments>3</experiments>
</comment>
<comment type="interaction">
    <interactant intactId="EBI-11996766">
        <id>Q8N609</id>
    </interactant>
    <interactant intactId="EBI-6942903">
        <id>Q96BA8</id>
        <label>CREB3L1</label>
    </interactant>
    <organismsDiffer>false</organismsDiffer>
    <experiments>3</experiments>
</comment>
<comment type="interaction">
    <interactant intactId="EBI-11996766">
        <id>Q8N609</id>
    </interactant>
    <interactant intactId="EBI-2680384">
        <id>Q9BQA9</id>
        <label>CYBC1</label>
    </interactant>
    <organismsDiffer>false</organismsDiffer>
    <experiments>3</experiments>
</comment>
<comment type="interaction">
    <interactant intactId="EBI-11996766">
        <id>Q8N609</id>
    </interactant>
    <interactant intactId="EBI-781551">
        <id>Q9Y282</id>
        <label>ERGIC3</label>
    </interactant>
    <organismsDiffer>false</organismsDiffer>
    <experiments>3</experiments>
</comment>
<comment type="interaction">
    <interactant intactId="EBI-11996766">
        <id>Q8N609</id>
    </interactant>
    <interactant intactId="EBI-17640610">
        <id>P34910-2</id>
        <label>EVI2B</label>
    </interactant>
    <organismsDiffer>false</organismsDiffer>
    <experiments>3</experiments>
</comment>
<comment type="interaction">
    <interactant intactId="EBI-11996766">
        <id>Q8N609</id>
    </interactant>
    <interactant intactId="EBI-18304435">
        <id>Q5JX71</id>
        <label>FAM209A</label>
    </interactant>
    <organismsDiffer>false</organismsDiffer>
    <experiments>3</experiments>
</comment>
<comment type="interaction">
    <interactant intactId="EBI-11996766">
        <id>Q8N609</id>
    </interactant>
    <interactant intactId="EBI-3918971">
        <id>Q9Y680</id>
        <label>FKBP7</label>
    </interactant>
    <organismsDiffer>false</organismsDiffer>
    <experiments>3</experiments>
</comment>
<comment type="interaction">
    <interactant intactId="EBI-11996766">
        <id>Q8N609</id>
    </interactant>
    <interactant intactId="EBI-11721746">
        <id>Q8TED1</id>
        <label>GPX8</label>
    </interactant>
    <organismsDiffer>false</organismsDiffer>
    <experiments>3</experiments>
</comment>
<comment type="interaction">
    <interactant intactId="EBI-11996766">
        <id>Q8N609</id>
    </interactant>
    <interactant intactId="EBI-358888">
        <id>Q96AG4</id>
        <label>LRRC59</label>
    </interactant>
    <organismsDiffer>false</organismsDiffer>
    <experiments>3</experiments>
</comment>
<comment type="interaction">
    <interactant intactId="EBI-11996766">
        <id>Q8N609</id>
    </interactant>
    <interactant intactId="EBI-11956541">
        <id>Q9GZY8-5</id>
        <label>MFF</label>
    </interactant>
    <organismsDiffer>false</organismsDiffer>
    <experiments>3</experiments>
</comment>
<comment type="interaction">
    <interactant intactId="EBI-11996766">
        <id>Q8N609</id>
    </interactant>
    <interactant intactId="EBI-17263240">
        <id>P15941-11</id>
        <label>MUC1</label>
    </interactant>
    <organismsDiffer>false</organismsDiffer>
    <experiments>3</experiments>
</comment>
<comment type="interaction">
    <interactant intactId="EBI-11996766">
        <id>Q8N609</id>
    </interactant>
    <interactant intactId="EBI-742388">
        <id>Q9H8W4</id>
        <label>PLEKHF2</label>
    </interactant>
    <organismsDiffer>false</organismsDiffer>
    <experiments>3</experiments>
</comment>
<comment type="interaction">
    <interactant intactId="EBI-11996766">
        <id>Q8N609</id>
    </interactant>
    <interactant intactId="EBI-949945">
        <id>Q53GL0</id>
        <label>PLEKHO1</label>
    </interactant>
    <organismsDiffer>false</organismsDiffer>
    <experiments>3</experiments>
</comment>
<comment type="interaction">
    <interactant intactId="EBI-11996766">
        <id>Q8N609</id>
    </interactant>
    <interactant intactId="EBI-722017">
        <id>O43688</id>
        <label>PLPP2</label>
    </interactant>
    <organismsDiffer>false</organismsDiffer>
    <experiments>3</experiments>
</comment>
<comment type="interaction">
    <interactant intactId="EBI-11996766">
        <id>Q8N609</id>
    </interactant>
    <interactant intactId="EBI-3920694">
        <id>Q9NR31</id>
        <label>SAR1A</label>
    </interactant>
    <organismsDiffer>false</organismsDiffer>
    <experiments>3</experiments>
</comment>
<comment type="interaction">
    <interactant intactId="EBI-11996766">
        <id>Q8N609</id>
    </interactant>
    <interactant intactId="EBI-11603430">
        <id>Q6PL24</id>
        <label>TMED8</label>
    </interactant>
    <organismsDiffer>false</organismsDiffer>
    <experiments>5</experiments>
</comment>
<comment type="interaction">
    <interactant intactId="EBI-11996766">
        <id>Q8N609</id>
    </interactant>
    <interactant intactId="EBI-18178701">
        <id>Q4KMG9</id>
        <label>TMEM52B</label>
    </interactant>
    <organismsDiffer>false</organismsDiffer>
    <experiments>3</experiments>
</comment>
<comment type="interaction">
    <interactant intactId="EBI-11996766">
        <id>Q8N609</id>
    </interactant>
    <interactant intactId="EBI-8649725">
        <id>Q9BSE2</id>
        <label>TMEM79</label>
    </interactant>
    <organismsDiffer>false</organismsDiffer>
    <experiments>3</experiments>
</comment>
<comment type="interaction">
    <interactant intactId="EBI-11996766">
        <id>Q8N609</id>
    </interactant>
    <interactant intactId="EBI-6447886">
        <id>Q9Y320</id>
        <label>TMX2</label>
    </interactant>
    <organismsDiffer>false</organismsDiffer>
    <experiments>3</experiments>
</comment>
<comment type="subcellular location">
    <subcellularLocation>
        <location evidence="1">Endoplasmic reticulum membrane</location>
        <topology evidence="1">Multi-pass membrane protein</topology>
    </subcellularLocation>
</comment>
<comment type="similarity">
    <text evidence="5">Belongs to the TRAM family.</text>
</comment>
<gene>
    <name type="primary">TRAM1L1</name>
</gene>
<protein>
    <recommendedName>
        <fullName>Translocating chain-associated membrane protein 1-like 1</fullName>
    </recommendedName>
</protein>
<organism>
    <name type="scientific">Homo sapiens</name>
    <name type="common">Human</name>
    <dbReference type="NCBI Taxonomy" id="9606"/>
    <lineage>
        <taxon>Eukaryota</taxon>
        <taxon>Metazoa</taxon>
        <taxon>Chordata</taxon>
        <taxon>Craniata</taxon>
        <taxon>Vertebrata</taxon>
        <taxon>Euteleostomi</taxon>
        <taxon>Mammalia</taxon>
        <taxon>Eutheria</taxon>
        <taxon>Euarchontoglires</taxon>
        <taxon>Primates</taxon>
        <taxon>Haplorrhini</taxon>
        <taxon>Catarrhini</taxon>
        <taxon>Hominidae</taxon>
        <taxon>Homo</taxon>
    </lineage>
</organism>
<sequence>MGLRKKSTKNPPVLSQEFILQNHADIVSCVGMFFLLGLVFEGTAEASIVFLTLQHSVAVPAAEEQATGSKSLYYYGVKDLATVFFYMLVAIIIHATIQEYVLDKINKRMQFTKAKQNKFNESGQFSVFYFFSCIWGTFILISENCLSDPTLIWKARPHSMMTFQMKFFYISQLAYWFHAFPELYFQKTKKQDIPRQLVYIGLHLFHITGAYLLYLNHLGLLLLVLHYFVELLSHMCGLFYFSDEKYQKGISLWAIVFILGRLVTLIVSVLTVGFHLAGSQNRNPDALTGNVNVLAAKIAVLSSSCTIQAYVTWNLITLWLQRWVEDSNIQASCMKKKRSRSSKKRTENGVGVETSNRVDCPPKRKEKSS</sequence>
<accession>Q8N609</accession>
<accession>Q8N2L7</accession>
<keyword id="KW-0256">Endoplasmic reticulum</keyword>
<keyword id="KW-0472">Membrane</keyword>
<keyword id="KW-0653">Protein transport</keyword>
<keyword id="KW-1267">Proteomics identification</keyword>
<keyword id="KW-1185">Reference proteome</keyword>
<keyword id="KW-0811">Translocation</keyword>
<keyword id="KW-0812">Transmembrane</keyword>
<keyword id="KW-1133">Transmembrane helix</keyword>
<keyword id="KW-0813">Transport</keyword>